<accession>Q0AWL9</accession>
<dbReference type="EC" id="3.6.5.n1" evidence="1"/>
<dbReference type="EMBL" id="CP000448">
    <property type="protein sequence ID" value="ABI68885.1"/>
    <property type="molecule type" value="Genomic_DNA"/>
</dbReference>
<dbReference type="RefSeq" id="WP_011640984.1">
    <property type="nucleotide sequence ID" value="NC_008346.1"/>
</dbReference>
<dbReference type="SMR" id="Q0AWL9"/>
<dbReference type="STRING" id="335541.Swol_1583"/>
<dbReference type="KEGG" id="swo:Swol_1583"/>
<dbReference type="eggNOG" id="COG0481">
    <property type="taxonomic scope" value="Bacteria"/>
</dbReference>
<dbReference type="HOGENOM" id="CLU_009995_3_3_9"/>
<dbReference type="OrthoDB" id="9801591at2"/>
<dbReference type="Proteomes" id="UP000001968">
    <property type="component" value="Chromosome"/>
</dbReference>
<dbReference type="GO" id="GO:0005886">
    <property type="term" value="C:plasma membrane"/>
    <property type="evidence" value="ECO:0007669"/>
    <property type="project" value="UniProtKB-SubCell"/>
</dbReference>
<dbReference type="GO" id="GO:0005525">
    <property type="term" value="F:GTP binding"/>
    <property type="evidence" value="ECO:0007669"/>
    <property type="project" value="UniProtKB-UniRule"/>
</dbReference>
<dbReference type="GO" id="GO:0003924">
    <property type="term" value="F:GTPase activity"/>
    <property type="evidence" value="ECO:0007669"/>
    <property type="project" value="UniProtKB-UniRule"/>
</dbReference>
<dbReference type="GO" id="GO:0043022">
    <property type="term" value="F:ribosome binding"/>
    <property type="evidence" value="ECO:0007669"/>
    <property type="project" value="UniProtKB-UniRule"/>
</dbReference>
<dbReference type="GO" id="GO:0003746">
    <property type="term" value="F:translation elongation factor activity"/>
    <property type="evidence" value="ECO:0007669"/>
    <property type="project" value="UniProtKB-UniRule"/>
</dbReference>
<dbReference type="GO" id="GO:0045727">
    <property type="term" value="P:positive regulation of translation"/>
    <property type="evidence" value="ECO:0007669"/>
    <property type="project" value="UniProtKB-UniRule"/>
</dbReference>
<dbReference type="CDD" id="cd03699">
    <property type="entry name" value="EF4_II"/>
    <property type="match status" value="1"/>
</dbReference>
<dbReference type="CDD" id="cd16260">
    <property type="entry name" value="EF4_III"/>
    <property type="match status" value="1"/>
</dbReference>
<dbReference type="CDD" id="cd01890">
    <property type="entry name" value="LepA"/>
    <property type="match status" value="1"/>
</dbReference>
<dbReference type="CDD" id="cd03709">
    <property type="entry name" value="lepA_C"/>
    <property type="match status" value="1"/>
</dbReference>
<dbReference type="FunFam" id="3.40.50.300:FF:000078">
    <property type="entry name" value="Elongation factor 4"/>
    <property type="match status" value="1"/>
</dbReference>
<dbReference type="FunFam" id="2.40.30.10:FF:000015">
    <property type="entry name" value="Translation factor GUF1, mitochondrial"/>
    <property type="match status" value="1"/>
</dbReference>
<dbReference type="FunFam" id="3.30.70.240:FF:000007">
    <property type="entry name" value="Translation factor GUF1, mitochondrial"/>
    <property type="match status" value="1"/>
</dbReference>
<dbReference type="FunFam" id="3.30.70.2570:FF:000001">
    <property type="entry name" value="Translation factor GUF1, mitochondrial"/>
    <property type="match status" value="1"/>
</dbReference>
<dbReference type="FunFam" id="3.30.70.870:FF:000004">
    <property type="entry name" value="Translation factor GUF1, mitochondrial"/>
    <property type="match status" value="1"/>
</dbReference>
<dbReference type="Gene3D" id="3.30.70.240">
    <property type="match status" value="1"/>
</dbReference>
<dbReference type="Gene3D" id="3.30.70.2570">
    <property type="entry name" value="Elongation factor 4, C-terminal domain"/>
    <property type="match status" value="1"/>
</dbReference>
<dbReference type="Gene3D" id="3.30.70.870">
    <property type="entry name" value="Elongation Factor G (Translational Gtpase), domain 3"/>
    <property type="match status" value="1"/>
</dbReference>
<dbReference type="Gene3D" id="3.40.50.300">
    <property type="entry name" value="P-loop containing nucleotide triphosphate hydrolases"/>
    <property type="match status" value="1"/>
</dbReference>
<dbReference type="Gene3D" id="2.40.30.10">
    <property type="entry name" value="Translation factors"/>
    <property type="match status" value="1"/>
</dbReference>
<dbReference type="HAMAP" id="MF_00071">
    <property type="entry name" value="LepA"/>
    <property type="match status" value="1"/>
</dbReference>
<dbReference type="InterPro" id="IPR006297">
    <property type="entry name" value="EF-4"/>
</dbReference>
<dbReference type="InterPro" id="IPR035647">
    <property type="entry name" value="EFG_III/V"/>
</dbReference>
<dbReference type="InterPro" id="IPR000640">
    <property type="entry name" value="EFG_V-like"/>
</dbReference>
<dbReference type="InterPro" id="IPR004161">
    <property type="entry name" value="EFTu-like_2"/>
</dbReference>
<dbReference type="InterPro" id="IPR031157">
    <property type="entry name" value="G_TR_CS"/>
</dbReference>
<dbReference type="InterPro" id="IPR038363">
    <property type="entry name" value="LepA_C_sf"/>
</dbReference>
<dbReference type="InterPro" id="IPR013842">
    <property type="entry name" value="LepA_CTD"/>
</dbReference>
<dbReference type="InterPro" id="IPR035654">
    <property type="entry name" value="LepA_IV"/>
</dbReference>
<dbReference type="InterPro" id="IPR027417">
    <property type="entry name" value="P-loop_NTPase"/>
</dbReference>
<dbReference type="InterPro" id="IPR005225">
    <property type="entry name" value="Small_GTP-bd"/>
</dbReference>
<dbReference type="InterPro" id="IPR000795">
    <property type="entry name" value="T_Tr_GTP-bd_dom"/>
</dbReference>
<dbReference type="InterPro" id="IPR009000">
    <property type="entry name" value="Transl_B-barrel_sf"/>
</dbReference>
<dbReference type="NCBIfam" id="TIGR01393">
    <property type="entry name" value="lepA"/>
    <property type="match status" value="1"/>
</dbReference>
<dbReference type="NCBIfam" id="TIGR00231">
    <property type="entry name" value="small_GTP"/>
    <property type="match status" value="1"/>
</dbReference>
<dbReference type="PANTHER" id="PTHR43512:SF4">
    <property type="entry name" value="TRANSLATION FACTOR GUF1 HOMOLOG, CHLOROPLASTIC"/>
    <property type="match status" value="1"/>
</dbReference>
<dbReference type="PANTHER" id="PTHR43512">
    <property type="entry name" value="TRANSLATION FACTOR GUF1-RELATED"/>
    <property type="match status" value="1"/>
</dbReference>
<dbReference type="Pfam" id="PF00679">
    <property type="entry name" value="EFG_C"/>
    <property type="match status" value="1"/>
</dbReference>
<dbReference type="Pfam" id="PF00009">
    <property type="entry name" value="GTP_EFTU"/>
    <property type="match status" value="1"/>
</dbReference>
<dbReference type="Pfam" id="PF03144">
    <property type="entry name" value="GTP_EFTU_D2"/>
    <property type="match status" value="1"/>
</dbReference>
<dbReference type="Pfam" id="PF06421">
    <property type="entry name" value="LepA_C"/>
    <property type="match status" value="1"/>
</dbReference>
<dbReference type="PRINTS" id="PR00315">
    <property type="entry name" value="ELONGATNFCT"/>
</dbReference>
<dbReference type="SMART" id="SM00838">
    <property type="entry name" value="EFG_C"/>
    <property type="match status" value="1"/>
</dbReference>
<dbReference type="SUPFAM" id="SSF54980">
    <property type="entry name" value="EF-G C-terminal domain-like"/>
    <property type="match status" value="2"/>
</dbReference>
<dbReference type="SUPFAM" id="SSF52540">
    <property type="entry name" value="P-loop containing nucleoside triphosphate hydrolases"/>
    <property type="match status" value="1"/>
</dbReference>
<dbReference type="SUPFAM" id="SSF50447">
    <property type="entry name" value="Translation proteins"/>
    <property type="match status" value="1"/>
</dbReference>
<dbReference type="PROSITE" id="PS00301">
    <property type="entry name" value="G_TR_1"/>
    <property type="match status" value="1"/>
</dbReference>
<dbReference type="PROSITE" id="PS51722">
    <property type="entry name" value="G_TR_2"/>
    <property type="match status" value="1"/>
</dbReference>
<organism>
    <name type="scientific">Syntrophomonas wolfei subsp. wolfei (strain DSM 2245B / Goettingen)</name>
    <dbReference type="NCBI Taxonomy" id="335541"/>
    <lineage>
        <taxon>Bacteria</taxon>
        <taxon>Bacillati</taxon>
        <taxon>Bacillota</taxon>
        <taxon>Clostridia</taxon>
        <taxon>Eubacteriales</taxon>
        <taxon>Syntrophomonadaceae</taxon>
        <taxon>Syntrophomonas</taxon>
    </lineage>
</organism>
<gene>
    <name evidence="1" type="primary">lepA</name>
    <name type="ordered locus">Swol_1583</name>
</gene>
<keyword id="KW-1003">Cell membrane</keyword>
<keyword id="KW-0342">GTP-binding</keyword>
<keyword id="KW-0378">Hydrolase</keyword>
<keyword id="KW-0472">Membrane</keyword>
<keyword id="KW-0547">Nucleotide-binding</keyword>
<keyword id="KW-0648">Protein biosynthesis</keyword>
<keyword id="KW-1185">Reference proteome</keyword>
<sequence length="599" mass="67592">MQKNIRNFSIIAHIDHGKSTLADRLLHLTGALSDREMKEQFLDKMELEREKGITIKLKPVRLNYRARDGQEYILNLIDTPGHVDFSYEVSRSLAACEGALLVVDASQGIEAQTLANVYMAMDLDLEIIGVVNKIDLPGAEPEVVKQEMENVLGLDQDEVLPISAKLGTGVEDVLEAIVERIPPPSGDKEAALKALIFDSYFDPYKGAISYIRVVEGELRQGDMIRMMSSGKEYEVDEIGVLSPYMTEVEVLSSGEVGYVAAGMKNVNDTRVGDTITGARRAAPEALSGYQEVKPMVYCGLYPLENSEFERLRDALDRLKLNDASLFYEPDNSDALGFGFRCGFLGLLHLEIVKERLEREYDLSLLATAPSVIYRVLLTDGSELMVQNPTHWPPPQKIDRVMEPYVKASIMVPNDYVGTIMELCQEKRGSFITMEYLTSHRVVINYRLPLAEILYDFFDALKSRTRGYASLDYEFHGFDTSDLIKLDIMLNGEVVDALSFIVHEDKAYYRARAIVNKLRKIIPRQMYEVAIQAAIGNRILARENIKAMRKDVLAKCYGGDITRKKKLLEKQKEGKKRMKQIGRVEVPKDAFMTVLDIEND</sequence>
<protein>
    <recommendedName>
        <fullName evidence="1">Elongation factor 4</fullName>
        <shortName evidence="1">EF-4</shortName>
        <ecNumber evidence="1">3.6.5.n1</ecNumber>
    </recommendedName>
    <alternativeName>
        <fullName evidence="1">Ribosomal back-translocase LepA</fullName>
    </alternativeName>
</protein>
<evidence type="ECO:0000255" key="1">
    <source>
        <dbReference type="HAMAP-Rule" id="MF_00071"/>
    </source>
</evidence>
<name>LEPA_SYNWW</name>
<comment type="function">
    <text evidence="1">Required for accurate and efficient protein synthesis under certain stress conditions. May act as a fidelity factor of the translation reaction, by catalyzing a one-codon backward translocation of tRNAs on improperly translocated ribosomes. Back-translocation proceeds from a post-translocation (POST) complex to a pre-translocation (PRE) complex, thus giving elongation factor G a second chance to translocate the tRNAs correctly. Binds to ribosomes in a GTP-dependent manner.</text>
</comment>
<comment type="catalytic activity">
    <reaction evidence="1">
        <text>GTP + H2O = GDP + phosphate + H(+)</text>
        <dbReference type="Rhea" id="RHEA:19669"/>
        <dbReference type="ChEBI" id="CHEBI:15377"/>
        <dbReference type="ChEBI" id="CHEBI:15378"/>
        <dbReference type="ChEBI" id="CHEBI:37565"/>
        <dbReference type="ChEBI" id="CHEBI:43474"/>
        <dbReference type="ChEBI" id="CHEBI:58189"/>
        <dbReference type="EC" id="3.6.5.n1"/>
    </reaction>
</comment>
<comment type="subcellular location">
    <subcellularLocation>
        <location evidence="1">Cell membrane</location>
        <topology evidence="1">Peripheral membrane protein</topology>
        <orientation evidence="1">Cytoplasmic side</orientation>
    </subcellularLocation>
</comment>
<comment type="similarity">
    <text evidence="1">Belongs to the TRAFAC class translation factor GTPase superfamily. Classic translation factor GTPase family. LepA subfamily.</text>
</comment>
<proteinExistence type="inferred from homology"/>
<reference key="1">
    <citation type="journal article" date="2010" name="Environ. Microbiol.">
        <title>The genome of Syntrophomonas wolfei: new insights into syntrophic metabolism and biohydrogen production.</title>
        <authorList>
            <person name="Sieber J.R."/>
            <person name="Sims D.R."/>
            <person name="Han C."/>
            <person name="Kim E."/>
            <person name="Lykidis A."/>
            <person name="Lapidus A.L."/>
            <person name="McDonnald E."/>
            <person name="Rohlin L."/>
            <person name="Culley D.E."/>
            <person name="Gunsalus R."/>
            <person name="McInerney M.J."/>
        </authorList>
    </citation>
    <scope>NUCLEOTIDE SEQUENCE [LARGE SCALE GENOMIC DNA]</scope>
    <source>
        <strain>DSM 2245B / Goettingen</strain>
    </source>
</reference>
<feature type="chain" id="PRO_0000265720" description="Elongation factor 4">
    <location>
        <begin position="1"/>
        <end position="599"/>
    </location>
</feature>
<feature type="domain" description="tr-type G">
    <location>
        <begin position="3"/>
        <end position="185"/>
    </location>
</feature>
<feature type="binding site" evidence="1">
    <location>
        <begin position="15"/>
        <end position="20"/>
    </location>
    <ligand>
        <name>GTP</name>
        <dbReference type="ChEBI" id="CHEBI:37565"/>
    </ligand>
</feature>
<feature type="binding site" evidence="1">
    <location>
        <begin position="132"/>
        <end position="135"/>
    </location>
    <ligand>
        <name>GTP</name>
        <dbReference type="ChEBI" id="CHEBI:37565"/>
    </ligand>
</feature>